<proteinExistence type="evidence at protein level"/>
<comment type="function">
    <text evidence="1">Plays a role in transformation by modulating the activities of cellular proteins involved in control of cell proliferation and by acting as a functional homolog of an activated tyrosine kinase-associated growth-factor receptor. Recruits upon association with host Ppp2/PP2A the Src tyrosine kinase components Src, Yes and Fyn, thereby activating their kinase activity. Activation of Shc1, Pclg1 and p85 mediate signal transduction pathways leading to cell cycle progression and cell division. MT also plays a role in regulation of early and late gene expression and in viral DNA replication.</text>
</comment>
<comment type="subunit">
    <text evidence="1">Interacts with host Ppp2/PP2A A and C subunits; this interaction alters Ppp2/PP2A substrate specificity and localization. Interacts with host Src, Yes1, and Fyn. Interacts with host Shc1, Plcg1 and p85; these interactions lead to cell cycle progression. Interacts with host 14-3-3 proteins.</text>
</comment>
<comment type="interaction">
    <interactant intactId="EBI-16746307">
        <id>P0DOJ9</id>
    </interactant>
    <interactant intactId="EBI-79464">
        <id>P27986</id>
        <label>PIK3R1</label>
    </interactant>
    <organismsDiffer>true</organismsDiffer>
    <experiments>2</experiments>
</comment>
<comment type="subcellular location">
    <subcellularLocation>
        <location evidence="4">Host membrane</location>
        <topology evidence="4">Single-pass membrane protein</topology>
    </subcellularLocation>
</comment>
<comment type="alternative products">
    <event type="alternative splicing"/>
    <isoform>
        <id>P0DOJ9-1</id>
        <id>P03076-1</id>
        <name>Middle T antigen</name>
        <sequence type="displayed"/>
    </isoform>
    <isoform>
        <id>P0DOJ6-2</id>
        <name>Small t antigen</name>
        <sequence type="external"/>
    </isoform>
    <isoform>
        <id>P0DOJ6-1</id>
        <id>P03074-1</id>
        <name>Large T antigen</name>
        <sequence type="external"/>
    </isoform>
</comment>
<comment type="domain">
    <text evidence="1">The NPTY motif is required for interaction with host Shc1 protein.</text>
</comment>
<comment type="PTM">
    <text evidence="1">Tyrosine-phosphorylated on three residues 250, 315 and 322, providing docking sites for host Shc1, p85, and Plcg1, respectively.</text>
</comment>
<keyword id="KW-0025">Alternative splicing</keyword>
<keyword id="KW-0244">Early protein</keyword>
<keyword id="KW-1043">Host membrane</keyword>
<keyword id="KW-0945">Host-virus interaction</keyword>
<keyword id="KW-0472">Membrane</keyword>
<keyword id="KW-0553">Oncogene</keyword>
<keyword id="KW-0597">Phosphoprotein</keyword>
<keyword id="KW-0812">Transmembrane</keyword>
<keyword id="KW-1133">Transmembrane helix</keyword>
<evidence type="ECO:0000250" key="1">
    <source>
        <dbReference type="UniProtKB" id="P03077"/>
    </source>
</evidence>
<evidence type="ECO:0000255" key="2"/>
<evidence type="ECO:0000256" key="3">
    <source>
        <dbReference type="SAM" id="MobiDB-lite"/>
    </source>
</evidence>
<evidence type="ECO:0000305" key="4"/>
<feature type="chain" id="PRO_0000442785" description="Middle T antigen">
    <location>
        <begin position="1"/>
        <end position="421"/>
    </location>
</feature>
<feature type="topological domain" description="Cytoplasmic" evidence="2">
    <location>
        <begin position="1"/>
        <end position="394"/>
    </location>
</feature>
<feature type="transmembrane region" description="Helical" evidence="2">
    <location>
        <begin position="395"/>
        <end position="415"/>
    </location>
</feature>
<feature type="topological domain" description="Extracellular" evidence="2">
    <location>
        <begin position="416"/>
        <end position="421"/>
    </location>
</feature>
<feature type="domain" description="J">
    <location>
        <begin position="12"/>
        <end position="75"/>
    </location>
</feature>
<feature type="region of interest" description="Disordered" evidence="3">
    <location>
        <begin position="215"/>
        <end position="237"/>
    </location>
</feature>
<feature type="compositionally biased region" description="Polar residues" evidence="3">
    <location>
        <begin position="215"/>
        <end position="235"/>
    </location>
</feature>
<feature type="modified residue" description="Phosphotyrosine; by host" evidence="1">
    <location>
        <position position="250"/>
    </location>
</feature>
<feature type="modified residue" description="Phosphoserine; by host" evidence="1">
    <location>
        <position position="257"/>
    </location>
</feature>
<feature type="modified residue" description="Phosphotyrosine; by host" evidence="1">
    <location>
        <position position="315"/>
    </location>
</feature>
<feature type="modified residue" description="Phosphotyrosine; by host" evidence="1">
    <location>
        <position position="322"/>
    </location>
</feature>
<organism>
    <name type="scientific">Mus musculus polyomavirus 1</name>
    <name type="common">MPyV</name>
    <dbReference type="NCBI Taxonomy" id="1891730"/>
    <lineage>
        <taxon>Viruses</taxon>
        <taxon>Monodnaviria</taxon>
        <taxon>Shotokuvirae</taxon>
        <taxon>Cossaviricota</taxon>
        <taxon>Papovaviricetes</taxon>
        <taxon>Sepolyvirales</taxon>
        <taxon>Polyomaviridae</taxon>
        <taxon>Alphapolyomavirus</taxon>
    </lineage>
</organism>
<organismHost>
    <name type="scientific">Mus musculus</name>
    <name type="common">Mouse</name>
    <dbReference type="NCBI Taxonomy" id="10090"/>
</organismHost>
<accession>P0DOJ9</accession>
<accession>P03076</accession>
<accession>Q76TX4</accession>
<accession>Q76W01</accession>
<accession>Q89765</accession>
<dbReference type="EMBL" id="U27812">
    <property type="protein sequence ID" value="AAA93240.1"/>
    <property type="molecule type" value="Genomic_DNA"/>
</dbReference>
<dbReference type="EMBL" id="U27813">
    <property type="protein sequence ID" value="AAA93246.1"/>
    <property type="molecule type" value="Genomic_DNA"/>
</dbReference>
<dbReference type="SMR" id="P0DOJ9"/>
<dbReference type="IntAct" id="P0DOJ9">
    <property type="interactions" value="8"/>
</dbReference>
<dbReference type="MINT" id="P0DOJ9"/>
<dbReference type="iPTMnet" id="P0DOJ9"/>
<dbReference type="Proteomes" id="UP000099402">
    <property type="component" value="Genome"/>
</dbReference>
<dbReference type="Proteomes" id="UP000161622">
    <property type="component" value="Genome"/>
</dbReference>
<dbReference type="GO" id="GO:0033644">
    <property type="term" value="C:host cell membrane"/>
    <property type="evidence" value="ECO:0007669"/>
    <property type="project" value="UniProtKB-SubCell"/>
</dbReference>
<dbReference type="GO" id="GO:0016020">
    <property type="term" value="C:membrane"/>
    <property type="evidence" value="ECO:0007669"/>
    <property type="project" value="UniProtKB-KW"/>
</dbReference>
<dbReference type="Gene3D" id="1.10.287.110">
    <property type="entry name" value="DnaJ domain"/>
    <property type="match status" value="1"/>
</dbReference>
<dbReference type="Gene3D" id="1.20.120.1860">
    <property type="entry name" value="Small t-antigen, unique domain"/>
    <property type="match status" value="1"/>
</dbReference>
<dbReference type="InterPro" id="IPR001623">
    <property type="entry name" value="DnaJ_domain"/>
</dbReference>
<dbReference type="InterPro" id="IPR036869">
    <property type="entry name" value="J_dom_sf"/>
</dbReference>
<dbReference type="InterPro" id="IPR003354">
    <property type="entry name" value="Papo_T_antigen"/>
</dbReference>
<dbReference type="InterPro" id="IPR036092">
    <property type="entry name" value="Papo_T_antigensf"/>
</dbReference>
<dbReference type="Pfam" id="PF02380">
    <property type="entry name" value="Papo_T_antigen"/>
    <property type="match status" value="1"/>
</dbReference>
<dbReference type="SMART" id="SM00271">
    <property type="entry name" value="DnaJ"/>
    <property type="match status" value="1"/>
</dbReference>
<dbReference type="SUPFAM" id="SSF46565">
    <property type="entry name" value="Chaperone J-domain"/>
    <property type="match status" value="1"/>
</dbReference>
<dbReference type="SUPFAM" id="SSF161240">
    <property type="entry name" value="T-antigen specific domain-like"/>
    <property type="match status" value="1"/>
</dbReference>
<reference key="1">
    <citation type="journal article" date="1995" name="J. Virol.">
        <title>Genetic and structural analysis of a virulence determinant in polyomavirus VP1.</title>
        <authorList>
            <person name="Bauer P.H."/>
            <person name="Bronson R.T."/>
            <person name="Fung S.C."/>
            <person name="Freund R."/>
            <person name="Stehle T."/>
            <person name="Harrison S.C."/>
            <person name="Benjamin T.L."/>
        </authorList>
    </citation>
    <scope>NUCLEOTIDE SEQUENCE [GENOMIC DNA]</scope>
    <source>
        <strain>Isolate LID</strain>
        <strain>Isolate PTA</strain>
    </source>
</reference>
<name>MT_POVM1</name>
<protein>
    <recommendedName>
        <fullName>Middle T antigen</fullName>
        <shortName>MT</shortName>
        <shortName>MT-AG</shortName>
    </recommendedName>
</protein>
<sequence length="421" mass="48694">MDRVLSRADKERLLELLKLPRQLWGDFGRMQQAYKQQSLLLHPDKGGSHALMQELNSLWGTFKTEVYNLRMNLGGTGFQVRRLHADGWNLSTKDTFGDRYYQRFCRMPLTCLVNVKYSSCSCILCLLRKQHRELKDKCDARCLVLGECFCLECYMQWFGTPTRDVLNLYADFIASMPIDWLDLDVHSVYNPKRRSEELRRAATVHYTMTTGHSAMEASTSQGNGMISSESGTPATSRRLRLPSLLSNPTYSVMRSHSYPPTRVLQQIHPHILLEEDEILVLLSPMTAYPRTPPELLYPESDQDQLEPLEEEEEEYMPMEDLYLDILPEEQVPQLIPPPIIPRAGLSPWEGLILRDLQRAHFDPILDASQRMRATHRAALRAHSMQRHLRRLGRTLLLVTFLAALLGICLMLFILIKRSRHF</sequence>